<comment type="function">
    <text>Methylates caffeoyl-CoA to feruloyl-CoA and 5-hydroxyferuloyl-CoA to sinapoyl-CoA. Plays a role in the synthesis of feruloylated polysaccharides. Involved in the reinforcement of the plant cell wall. Also involved in the responding to wounding or pathogen challenge by the increased formation of cell wall-bound ferulic acid polymers.</text>
</comment>
<comment type="catalytic activity">
    <reaction>
        <text>(E)-caffeoyl-CoA + S-adenosyl-L-methionine = (E)-feruloyl-CoA + S-adenosyl-L-homocysteine + H(+)</text>
        <dbReference type="Rhea" id="RHEA:16925"/>
        <dbReference type="ChEBI" id="CHEBI:15378"/>
        <dbReference type="ChEBI" id="CHEBI:57856"/>
        <dbReference type="ChEBI" id="CHEBI:59789"/>
        <dbReference type="ChEBI" id="CHEBI:87136"/>
        <dbReference type="ChEBI" id="CHEBI:87305"/>
        <dbReference type="EC" id="2.1.1.104"/>
    </reaction>
</comment>
<comment type="cofactor">
    <cofactor evidence="1">
        <name>a divalent metal cation</name>
        <dbReference type="ChEBI" id="CHEBI:60240"/>
    </cofactor>
    <text evidence="1">Binds 1 divalent metal cation per subunit.</text>
</comment>
<comment type="pathway">
    <text>Aromatic compound metabolism; phenylpropanoid biosynthesis.</text>
</comment>
<comment type="miscellaneous">
    <text>On the 2D-gel the determined pI of this protein is: 5.2, its MW is: 30 kDa.</text>
</comment>
<comment type="similarity">
    <text evidence="2">Belongs to the class I-like SAM-binding methyltransferase superfamily. Cation-dependent O-methyltransferase family. CCoAMT subfamily.</text>
</comment>
<dbReference type="EC" id="2.1.1.104"/>
<dbReference type="UniPathway" id="UPA00711"/>
<dbReference type="GO" id="GO:0042409">
    <property type="term" value="F:caffeoyl-CoA O-methyltransferase activity"/>
    <property type="evidence" value="ECO:0007669"/>
    <property type="project" value="UniProtKB-EC"/>
</dbReference>
<dbReference type="GO" id="GO:0046872">
    <property type="term" value="F:metal ion binding"/>
    <property type="evidence" value="ECO:0007669"/>
    <property type="project" value="UniProtKB-KW"/>
</dbReference>
<dbReference type="GO" id="GO:0009809">
    <property type="term" value="P:lignin biosynthetic process"/>
    <property type="evidence" value="ECO:0007669"/>
    <property type="project" value="UniProtKB-KW"/>
</dbReference>
<dbReference type="GO" id="GO:0032259">
    <property type="term" value="P:methylation"/>
    <property type="evidence" value="ECO:0007669"/>
    <property type="project" value="UniProtKB-KW"/>
</dbReference>
<evidence type="ECO:0000250" key="1">
    <source>
        <dbReference type="UniProtKB" id="Q40313"/>
    </source>
</evidence>
<evidence type="ECO:0000305" key="2"/>
<proteinExistence type="evidence at protein level"/>
<protein>
    <recommendedName>
        <fullName>Probable caffeoyl-CoA O-methyltransferase</fullName>
        <ecNumber>2.1.1.104</ecNumber>
    </recommendedName>
    <alternativeName>
        <fullName>Trans-caffeoyl-CoA 3-O-methyltransferase</fullName>
        <shortName>CCoAMT</shortName>
        <shortName>CCoAOMT</shortName>
    </alternativeName>
    <alternativeName>
        <fullName>Water stress-responsive protein 13</fullName>
    </alternativeName>
</protein>
<feature type="chain" id="PRO_0000165689" description="Probable caffeoyl-CoA O-methyltransferase">
    <location>
        <begin position="1" status="less than"/>
        <end position="24" status="greater than"/>
    </location>
</feature>
<feature type="non-consecutive residues" evidence="2">
    <location>
        <begin position="9"/>
        <end position="10"/>
    </location>
</feature>
<feature type="non-terminal residue">
    <location>
        <position position="1"/>
    </location>
</feature>
<feature type="non-terminal residue">
    <location>
        <position position="24"/>
    </location>
</feature>
<accession>P81081</accession>
<sequence>VGGLIAYDNIEISQIPVGDGVTLC</sequence>
<keyword id="KW-0903">Direct protein sequencing</keyword>
<keyword id="KW-0438">Lignin biosynthesis</keyword>
<keyword id="KW-0479">Metal-binding</keyword>
<keyword id="KW-0489">Methyltransferase</keyword>
<keyword id="KW-0949">S-adenosyl-L-methionine</keyword>
<keyword id="KW-0808">Transferase</keyword>
<organism>
    <name type="scientific">Pinus pinaster</name>
    <name type="common">Maritime pine</name>
    <dbReference type="NCBI Taxonomy" id="71647"/>
    <lineage>
        <taxon>Eukaryota</taxon>
        <taxon>Viridiplantae</taxon>
        <taxon>Streptophyta</taxon>
        <taxon>Embryophyta</taxon>
        <taxon>Tracheophyta</taxon>
        <taxon>Spermatophyta</taxon>
        <taxon>Pinopsida</taxon>
        <taxon>Pinidae</taxon>
        <taxon>Conifers I</taxon>
        <taxon>Pinales</taxon>
        <taxon>Pinaceae</taxon>
        <taxon>Pinus</taxon>
        <taxon>Pinus subgen. Pinus</taxon>
    </lineage>
</organism>
<name>CAMT_PINPS</name>
<reference key="1">
    <citation type="journal article" date="1998" name="Plant Mol. Biol.">
        <title>Water-deficit-responsive proteins in maritime pine.</title>
        <authorList>
            <person name="Costa P."/>
            <person name="Bahrman N."/>
            <person name="Frigerio J.-M."/>
            <person name="Kremer A."/>
            <person name="Plomion C."/>
        </authorList>
    </citation>
    <scope>PROTEIN SEQUENCE</scope>
    <source>
        <tissue>Needle</tissue>
    </source>
</reference>
<reference key="2">
    <citation type="journal article" date="1999" name="Electrophoresis">
        <title>Separation and characterization of needle and xylem maritime pine proteins.</title>
        <authorList>
            <person name="Costa P."/>
            <person name="Pionneau C."/>
            <person name="Bauw G."/>
            <person name="Dubos C."/>
            <person name="Bahrman N."/>
            <person name="Kremer A."/>
            <person name="Frigerio J.-M."/>
            <person name="Plomion C."/>
        </authorList>
    </citation>
    <scope>PROTEIN SEQUENCE</scope>
    <source>
        <tissue>Needle</tissue>
    </source>
</reference>